<organism>
    <name type="scientific">Escherichia coli O6:H1 (strain CFT073 / ATCC 700928 / UPEC)</name>
    <dbReference type="NCBI Taxonomy" id="199310"/>
    <lineage>
        <taxon>Bacteria</taxon>
        <taxon>Pseudomonadati</taxon>
        <taxon>Pseudomonadota</taxon>
        <taxon>Gammaproteobacteria</taxon>
        <taxon>Enterobacterales</taxon>
        <taxon>Enterobacteriaceae</taxon>
        <taxon>Escherichia</taxon>
    </lineage>
</organism>
<name>RBSD_ECOL6</name>
<dbReference type="EC" id="5.4.99.62" evidence="1"/>
<dbReference type="EMBL" id="AE014075">
    <property type="protein sequence ID" value="AAN83108.1"/>
    <property type="status" value="ALT_INIT"/>
    <property type="molecule type" value="Genomic_DNA"/>
</dbReference>
<dbReference type="RefSeq" id="WP_001346607.1">
    <property type="nucleotide sequence ID" value="NZ_CP051263.1"/>
</dbReference>
<dbReference type="SMR" id="Q8FBS4"/>
<dbReference type="STRING" id="199310.c4676"/>
<dbReference type="KEGG" id="ecc:c4676"/>
<dbReference type="eggNOG" id="COG1869">
    <property type="taxonomic scope" value="Bacteria"/>
</dbReference>
<dbReference type="HOGENOM" id="CLU_135498_0_0_6"/>
<dbReference type="UniPathway" id="UPA00916">
    <property type="reaction ID" value="UER00888"/>
</dbReference>
<dbReference type="Proteomes" id="UP000001410">
    <property type="component" value="Chromosome"/>
</dbReference>
<dbReference type="GO" id="GO:0005829">
    <property type="term" value="C:cytosol"/>
    <property type="evidence" value="ECO:0007669"/>
    <property type="project" value="TreeGrafter"/>
</dbReference>
<dbReference type="GO" id="GO:0062193">
    <property type="term" value="F:D-ribose pyranase activity"/>
    <property type="evidence" value="ECO:0007669"/>
    <property type="project" value="UniProtKB-EC"/>
</dbReference>
<dbReference type="GO" id="GO:0016872">
    <property type="term" value="F:intramolecular lyase activity"/>
    <property type="evidence" value="ECO:0007669"/>
    <property type="project" value="UniProtKB-UniRule"/>
</dbReference>
<dbReference type="GO" id="GO:0048029">
    <property type="term" value="F:monosaccharide binding"/>
    <property type="evidence" value="ECO:0007669"/>
    <property type="project" value="InterPro"/>
</dbReference>
<dbReference type="GO" id="GO:0019303">
    <property type="term" value="P:D-ribose catabolic process"/>
    <property type="evidence" value="ECO:0007669"/>
    <property type="project" value="UniProtKB-UniRule"/>
</dbReference>
<dbReference type="FunFam" id="3.40.1650.10:FF:000002">
    <property type="entry name" value="D-ribose pyranase"/>
    <property type="match status" value="1"/>
</dbReference>
<dbReference type="Gene3D" id="3.40.1650.10">
    <property type="entry name" value="RbsD-like domain"/>
    <property type="match status" value="1"/>
</dbReference>
<dbReference type="HAMAP" id="MF_01661">
    <property type="entry name" value="D_rib_pyranase"/>
    <property type="match status" value="1"/>
</dbReference>
<dbReference type="InterPro" id="IPR023064">
    <property type="entry name" value="D-ribose_pyranase"/>
</dbReference>
<dbReference type="InterPro" id="IPR023750">
    <property type="entry name" value="RbsD-like_sf"/>
</dbReference>
<dbReference type="InterPro" id="IPR007721">
    <property type="entry name" value="RbsD_FucU"/>
</dbReference>
<dbReference type="NCBIfam" id="NF008761">
    <property type="entry name" value="PRK11797.1"/>
    <property type="match status" value="1"/>
</dbReference>
<dbReference type="PANTHER" id="PTHR37831">
    <property type="entry name" value="D-RIBOSE PYRANASE"/>
    <property type="match status" value="1"/>
</dbReference>
<dbReference type="PANTHER" id="PTHR37831:SF1">
    <property type="entry name" value="D-RIBOSE PYRANASE"/>
    <property type="match status" value="1"/>
</dbReference>
<dbReference type="Pfam" id="PF05025">
    <property type="entry name" value="RbsD_FucU"/>
    <property type="match status" value="1"/>
</dbReference>
<dbReference type="SUPFAM" id="SSF102546">
    <property type="entry name" value="RbsD-like"/>
    <property type="match status" value="1"/>
</dbReference>
<accession>Q8FBS4</accession>
<comment type="function">
    <text evidence="1">Catalyzes the interconversion of beta-pyran and beta-furan forms of D-ribose.</text>
</comment>
<comment type="catalytic activity">
    <reaction evidence="1">
        <text>beta-D-ribopyranose = beta-D-ribofuranose</text>
        <dbReference type="Rhea" id="RHEA:25432"/>
        <dbReference type="ChEBI" id="CHEBI:27476"/>
        <dbReference type="ChEBI" id="CHEBI:47002"/>
        <dbReference type="EC" id="5.4.99.62"/>
    </reaction>
</comment>
<comment type="pathway">
    <text evidence="1">Carbohydrate metabolism; D-ribose degradation; D-ribose 5-phosphate from beta-D-ribopyranose: step 1/2.</text>
</comment>
<comment type="subunit">
    <text evidence="1">Homodecamer.</text>
</comment>
<comment type="subcellular location">
    <subcellularLocation>
        <location evidence="1">Cytoplasm</location>
    </subcellularLocation>
</comment>
<comment type="similarity">
    <text evidence="1">Belongs to the RbsD / FucU family. RbsD subfamily.</text>
</comment>
<comment type="sequence caution" evidence="2">
    <conflict type="erroneous initiation">
        <sequence resource="EMBL-CDS" id="AAN83108"/>
    </conflict>
</comment>
<reference key="1">
    <citation type="journal article" date="2002" name="Proc. Natl. Acad. Sci. U.S.A.">
        <title>Extensive mosaic structure revealed by the complete genome sequence of uropathogenic Escherichia coli.</title>
        <authorList>
            <person name="Welch R.A."/>
            <person name="Burland V."/>
            <person name="Plunkett G. III"/>
            <person name="Redford P."/>
            <person name="Roesch P."/>
            <person name="Rasko D."/>
            <person name="Buckles E.L."/>
            <person name="Liou S.-R."/>
            <person name="Boutin A."/>
            <person name="Hackett J."/>
            <person name="Stroud D."/>
            <person name="Mayhew G.F."/>
            <person name="Rose D.J."/>
            <person name="Zhou S."/>
            <person name="Schwartz D.C."/>
            <person name="Perna N.T."/>
            <person name="Mobley H.L.T."/>
            <person name="Donnenberg M.S."/>
            <person name="Blattner F.R."/>
        </authorList>
    </citation>
    <scope>NUCLEOTIDE SEQUENCE [LARGE SCALE GENOMIC DNA]</scope>
    <source>
        <strain>CFT073 / ATCC 700928 / UPEC</strain>
    </source>
</reference>
<sequence length="139" mass="15312">MKKGTVLNSDISSVISRLGHTDTLVVCDAGLPIPKSTTRIDMALTQGVPSFMQVLGVVTNEMQVEAVIIAEEIKQHNPQLHETLLTHLEQLQKHQGNTIEIRYTTHEQFKQQTAESQAVIRSGECSPYANIILCAGVTF</sequence>
<keyword id="KW-0119">Carbohydrate metabolism</keyword>
<keyword id="KW-0963">Cytoplasm</keyword>
<keyword id="KW-0413">Isomerase</keyword>
<keyword id="KW-1185">Reference proteome</keyword>
<gene>
    <name evidence="1" type="primary">rbsD</name>
    <name type="ordered locus">c4676</name>
</gene>
<protein>
    <recommendedName>
        <fullName evidence="1">D-ribose pyranase</fullName>
        <ecNumber evidence="1">5.4.99.62</ecNumber>
    </recommendedName>
</protein>
<feature type="chain" id="PRO_0000346202" description="D-ribose pyranase">
    <location>
        <begin position="1"/>
        <end position="139"/>
    </location>
</feature>
<feature type="active site" description="Proton donor" evidence="1">
    <location>
        <position position="20"/>
    </location>
</feature>
<feature type="binding site" evidence="1">
    <location>
        <position position="28"/>
    </location>
    <ligand>
        <name>substrate</name>
    </ligand>
</feature>
<feature type="binding site" evidence="1">
    <location>
        <position position="106"/>
    </location>
    <ligand>
        <name>substrate</name>
    </ligand>
</feature>
<feature type="binding site" evidence="1">
    <location>
        <begin position="128"/>
        <end position="130"/>
    </location>
    <ligand>
        <name>substrate</name>
    </ligand>
</feature>
<evidence type="ECO:0000255" key="1">
    <source>
        <dbReference type="HAMAP-Rule" id="MF_01661"/>
    </source>
</evidence>
<evidence type="ECO:0000305" key="2"/>
<proteinExistence type="inferred from homology"/>